<proteinExistence type="evidence at protein level"/>
<accession>Q46909</accession>
<accession>Q2MA58</accession>
<name>YGCS_ECOLI</name>
<protein>
    <recommendedName>
        <fullName>Inner membrane metabolite transport protein YgcS</fullName>
    </recommendedName>
</protein>
<dbReference type="EMBL" id="U29579">
    <property type="protein sequence ID" value="AAA69281.1"/>
    <property type="status" value="ALT_INIT"/>
    <property type="molecule type" value="Genomic_DNA"/>
</dbReference>
<dbReference type="EMBL" id="U00096">
    <property type="protein sequence ID" value="AAC75813.2"/>
    <property type="molecule type" value="Genomic_DNA"/>
</dbReference>
<dbReference type="EMBL" id="AP009048">
    <property type="protein sequence ID" value="BAE76848.1"/>
    <property type="molecule type" value="Genomic_DNA"/>
</dbReference>
<dbReference type="PIR" id="G65058">
    <property type="entry name" value="G65058"/>
</dbReference>
<dbReference type="RefSeq" id="NP_417251.2">
    <property type="nucleotide sequence ID" value="NC_000913.3"/>
</dbReference>
<dbReference type="SMR" id="Q46909"/>
<dbReference type="BioGRID" id="4260743">
    <property type="interactions" value="160"/>
</dbReference>
<dbReference type="FunCoup" id="Q46909">
    <property type="interactions" value="399"/>
</dbReference>
<dbReference type="STRING" id="511145.b2771"/>
<dbReference type="TCDB" id="2.A.1.1.95">
    <property type="family name" value="the major facilitator superfamily (mfs)"/>
</dbReference>
<dbReference type="PaxDb" id="511145-b2771"/>
<dbReference type="EnsemblBacteria" id="AAC75813">
    <property type="protein sequence ID" value="AAC75813"/>
    <property type="gene ID" value="b2771"/>
</dbReference>
<dbReference type="GeneID" id="947238"/>
<dbReference type="KEGG" id="ecj:JW5845"/>
<dbReference type="KEGG" id="eco:b2771"/>
<dbReference type="KEGG" id="ecoc:C3026_15225"/>
<dbReference type="PATRIC" id="fig|511145.12.peg.2869"/>
<dbReference type="EchoBASE" id="EB2927"/>
<dbReference type="eggNOG" id="COG0477">
    <property type="taxonomic scope" value="Bacteria"/>
</dbReference>
<dbReference type="HOGENOM" id="CLU_001265_46_6_6"/>
<dbReference type="InParanoid" id="Q46909"/>
<dbReference type="OMA" id="FPMETRA"/>
<dbReference type="OrthoDB" id="3252866at2"/>
<dbReference type="PhylomeDB" id="Q46909"/>
<dbReference type="BioCyc" id="EcoCyc:B2771-MONOMER"/>
<dbReference type="PRO" id="PR:Q46909"/>
<dbReference type="Proteomes" id="UP000000625">
    <property type="component" value="Chromosome"/>
</dbReference>
<dbReference type="GO" id="GO:0005886">
    <property type="term" value="C:plasma membrane"/>
    <property type="evidence" value="ECO:0000314"/>
    <property type="project" value="EcoCyc"/>
</dbReference>
<dbReference type="GO" id="GO:0022857">
    <property type="term" value="F:transmembrane transporter activity"/>
    <property type="evidence" value="ECO:0007669"/>
    <property type="project" value="InterPro"/>
</dbReference>
<dbReference type="CDD" id="cd17316">
    <property type="entry name" value="MFS_SV2_like"/>
    <property type="match status" value="1"/>
</dbReference>
<dbReference type="FunFam" id="1.20.1250.20:FF:000259">
    <property type="entry name" value="Major facilitator family transporter"/>
    <property type="match status" value="1"/>
</dbReference>
<dbReference type="Gene3D" id="1.20.1250.20">
    <property type="entry name" value="MFS general substrate transporter like domains"/>
    <property type="match status" value="1"/>
</dbReference>
<dbReference type="InterPro" id="IPR020846">
    <property type="entry name" value="MFS_dom"/>
</dbReference>
<dbReference type="InterPro" id="IPR005828">
    <property type="entry name" value="MFS_sugar_transport-like"/>
</dbReference>
<dbReference type="InterPro" id="IPR036259">
    <property type="entry name" value="MFS_trans_sf"/>
</dbReference>
<dbReference type="InterPro" id="IPR005829">
    <property type="entry name" value="Sugar_transporter_CS"/>
</dbReference>
<dbReference type="PANTHER" id="PTHR23511">
    <property type="entry name" value="SYNAPTIC VESICLE GLYCOPROTEIN 2"/>
    <property type="match status" value="1"/>
</dbReference>
<dbReference type="PANTHER" id="PTHR23511:SF34">
    <property type="entry name" value="SYNAPTIC VESICLE GLYCOPROTEIN 2"/>
    <property type="match status" value="1"/>
</dbReference>
<dbReference type="Pfam" id="PF00083">
    <property type="entry name" value="Sugar_tr"/>
    <property type="match status" value="1"/>
</dbReference>
<dbReference type="SUPFAM" id="SSF103473">
    <property type="entry name" value="MFS general substrate transporter"/>
    <property type="match status" value="1"/>
</dbReference>
<dbReference type="PROSITE" id="PS50850">
    <property type="entry name" value="MFS"/>
    <property type="match status" value="1"/>
</dbReference>
<dbReference type="PROSITE" id="PS00217">
    <property type="entry name" value="SUGAR_TRANSPORT_2"/>
    <property type="match status" value="1"/>
</dbReference>
<gene>
    <name type="primary">ygcS</name>
    <name type="ordered locus">b2771</name>
    <name type="ordered locus">JW5845</name>
</gene>
<reference key="1">
    <citation type="journal article" date="1997" name="Science">
        <title>The complete genome sequence of Escherichia coli K-12.</title>
        <authorList>
            <person name="Blattner F.R."/>
            <person name="Plunkett G. III"/>
            <person name="Bloch C.A."/>
            <person name="Perna N.T."/>
            <person name="Burland V."/>
            <person name="Riley M."/>
            <person name="Collado-Vides J."/>
            <person name="Glasner J.D."/>
            <person name="Rode C.K."/>
            <person name="Mayhew G.F."/>
            <person name="Gregor J."/>
            <person name="Davis N.W."/>
            <person name="Kirkpatrick H.A."/>
            <person name="Goeden M.A."/>
            <person name="Rose D.J."/>
            <person name="Mau B."/>
            <person name="Shao Y."/>
        </authorList>
    </citation>
    <scope>NUCLEOTIDE SEQUENCE [LARGE SCALE GENOMIC DNA]</scope>
    <source>
        <strain>K12 / MG1655 / ATCC 47076</strain>
    </source>
</reference>
<reference key="2">
    <citation type="journal article" date="2006" name="Mol. Syst. Biol.">
        <title>Highly accurate genome sequences of Escherichia coli K-12 strains MG1655 and W3110.</title>
        <authorList>
            <person name="Hayashi K."/>
            <person name="Morooka N."/>
            <person name="Yamamoto Y."/>
            <person name="Fujita K."/>
            <person name="Isono K."/>
            <person name="Choi S."/>
            <person name="Ohtsubo E."/>
            <person name="Baba T."/>
            <person name="Wanner B.L."/>
            <person name="Mori H."/>
            <person name="Horiuchi T."/>
        </authorList>
    </citation>
    <scope>NUCLEOTIDE SEQUENCE [LARGE SCALE GENOMIC DNA]</scope>
    <source>
        <strain>K12 / W3110 / ATCC 27325 / DSM 5911</strain>
    </source>
</reference>
<reference key="3">
    <citation type="journal article" date="2005" name="Science">
        <title>Global topology analysis of the Escherichia coli inner membrane proteome.</title>
        <authorList>
            <person name="Daley D.O."/>
            <person name="Rapp M."/>
            <person name="Granseth E."/>
            <person name="Melen K."/>
            <person name="Drew D."/>
            <person name="von Heijne G."/>
        </authorList>
    </citation>
    <scope>TOPOLOGY [LARGE SCALE ANALYSIS]</scope>
    <source>
        <strain>K12 / MG1655 / ATCC 47076</strain>
    </source>
</reference>
<sequence>MNTSPVRMDDLPLNRFHCRIAALTFGAHLTDGYVLGVIGYAIIQLTPAMQLTPFMAGMIGGSALLGLFLGSLVLGWISDHIGRQKIFTFSFLLITLASFLQFFATTPEHLIGLRILIGIGLGGDYSVGHTLLAEFSPRRHRGILLGAFSVVWTVGYVLASIAGHHFISENPEAWRWLLASAALPALLITLLRWGTPESPRWLLRQGRFAEAHAIVHRYFGPHVLLGDEVVTATHKHIKTLFSSRYWRRTAFNSVFFVCLVIPWFVIYTWLPTIAQTIGLEDALTASLMLNALLIVGALLGLVLTHLLAHRKFLLGSFLLLAATLVVMACLPSGSSLTLLLFVLFSTTISAVSNLVGILPAESFPTDIRSLGVGFATAMSRLGAAVSTGLLPWVLAQWGMQVTLLLLATVLLVGFVVTWLWAPETKALPLVAAGNVGGANEHSVSV</sequence>
<feature type="chain" id="PRO_0000050483" description="Inner membrane metabolite transport protein YgcS">
    <location>
        <begin position="1"/>
        <end position="445"/>
    </location>
</feature>
<feature type="topological domain" description="Cytoplasmic" evidence="1">
    <location>
        <begin position="1"/>
        <end position="22"/>
    </location>
</feature>
<feature type="transmembrane region" description="Helical; Name=1" evidence="1">
    <location>
        <begin position="23"/>
        <end position="43"/>
    </location>
</feature>
<feature type="topological domain" description="Periplasmic" evidence="1">
    <location>
        <begin position="44"/>
        <end position="56"/>
    </location>
</feature>
<feature type="transmembrane region" description="Helical; Name=2" evidence="1">
    <location>
        <begin position="57"/>
        <end position="77"/>
    </location>
</feature>
<feature type="topological domain" description="Cytoplasmic" evidence="1">
    <location>
        <begin position="78"/>
        <end position="85"/>
    </location>
</feature>
<feature type="transmembrane region" description="Helical; Name=3" evidence="1">
    <location>
        <begin position="86"/>
        <end position="106"/>
    </location>
</feature>
<feature type="topological domain" description="Periplasmic" evidence="1">
    <location>
        <begin position="107"/>
        <end position="114"/>
    </location>
</feature>
<feature type="transmembrane region" description="Helical; Name=4" evidence="1">
    <location>
        <begin position="115"/>
        <end position="135"/>
    </location>
</feature>
<feature type="topological domain" description="Cytoplasmic" evidence="1">
    <location>
        <begin position="136"/>
        <end position="142"/>
    </location>
</feature>
<feature type="transmembrane region" description="Helical; Name=5" evidence="1">
    <location>
        <begin position="143"/>
        <end position="163"/>
    </location>
</feature>
<feature type="topological domain" description="Periplasmic" evidence="1">
    <location>
        <begin position="164"/>
        <end position="175"/>
    </location>
</feature>
<feature type="transmembrane region" description="Helical; Name=6" evidence="1">
    <location>
        <begin position="176"/>
        <end position="196"/>
    </location>
</feature>
<feature type="topological domain" description="Cytoplasmic" evidence="1">
    <location>
        <begin position="197"/>
        <end position="253"/>
    </location>
</feature>
<feature type="transmembrane region" description="Helical; Name=7" evidence="1">
    <location>
        <begin position="254"/>
        <end position="274"/>
    </location>
</feature>
<feature type="topological domain" description="Periplasmic" evidence="1">
    <location>
        <begin position="275"/>
        <end position="286"/>
    </location>
</feature>
<feature type="transmembrane region" description="Helical; Name=8" evidence="1">
    <location>
        <begin position="287"/>
        <end position="307"/>
    </location>
</feature>
<feature type="topological domain" description="Cytoplasmic" evidence="1">
    <location>
        <begin position="308"/>
        <end position="311"/>
    </location>
</feature>
<feature type="transmembrane region" description="Helical; Name=9" evidence="1">
    <location>
        <begin position="312"/>
        <end position="332"/>
    </location>
</feature>
<feature type="topological domain" description="Periplasmic" evidence="1">
    <location>
        <begin position="333"/>
        <end position="337"/>
    </location>
</feature>
<feature type="transmembrane region" description="Helical; Name=10" evidence="1">
    <location>
        <begin position="338"/>
        <end position="358"/>
    </location>
</feature>
<feature type="topological domain" description="Cytoplasmic" evidence="1">
    <location>
        <begin position="359"/>
        <end position="369"/>
    </location>
</feature>
<feature type="transmembrane region" description="Helical; Name=11" evidence="1">
    <location>
        <begin position="370"/>
        <end position="390"/>
    </location>
</feature>
<feature type="topological domain" description="Periplasmic" evidence="1">
    <location>
        <begin position="391"/>
        <end position="400"/>
    </location>
</feature>
<feature type="transmembrane region" description="Helical; Name=12" evidence="1">
    <location>
        <begin position="401"/>
        <end position="421"/>
    </location>
</feature>
<feature type="topological domain" description="Cytoplasmic" evidence="1">
    <location>
        <begin position="422"/>
        <end position="445"/>
    </location>
</feature>
<keyword id="KW-0997">Cell inner membrane</keyword>
<keyword id="KW-1003">Cell membrane</keyword>
<keyword id="KW-0472">Membrane</keyword>
<keyword id="KW-1185">Reference proteome</keyword>
<keyword id="KW-0812">Transmembrane</keyword>
<keyword id="KW-1133">Transmembrane helix</keyword>
<keyword id="KW-0813">Transport</keyword>
<evidence type="ECO:0000255" key="1"/>
<evidence type="ECO:0000305" key="2"/>
<organism>
    <name type="scientific">Escherichia coli (strain K12)</name>
    <dbReference type="NCBI Taxonomy" id="83333"/>
    <lineage>
        <taxon>Bacteria</taxon>
        <taxon>Pseudomonadati</taxon>
        <taxon>Pseudomonadota</taxon>
        <taxon>Gammaproteobacteria</taxon>
        <taxon>Enterobacterales</taxon>
        <taxon>Enterobacteriaceae</taxon>
        <taxon>Escherichia</taxon>
    </lineage>
</organism>
<comment type="subcellular location">
    <subcellularLocation>
        <location>Cell inner membrane</location>
        <topology>Multi-pass membrane protein</topology>
    </subcellularLocation>
</comment>
<comment type="similarity">
    <text evidence="2">Belongs to the major facilitator superfamily. Sugar transporter (TC 2.A.1.1) family.</text>
</comment>
<comment type="sequence caution" evidence="2">
    <conflict type="erroneous initiation">
        <sequence resource="EMBL-CDS" id="AAA69281"/>
    </conflict>
    <text>Extended N-terminus.</text>
</comment>